<reference key="1">
    <citation type="journal article" date="2004" name="Nature">
        <title>Genome sequence of Silicibacter pomeroyi reveals adaptations to the marine environment.</title>
        <authorList>
            <person name="Moran M.A."/>
            <person name="Buchan A."/>
            <person name="Gonzalez J.M."/>
            <person name="Heidelberg J.F."/>
            <person name="Whitman W.B."/>
            <person name="Kiene R.P."/>
            <person name="Henriksen J.R."/>
            <person name="King G.M."/>
            <person name="Belas R."/>
            <person name="Fuqua C."/>
            <person name="Brinkac L.M."/>
            <person name="Lewis M."/>
            <person name="Johri S."/>
            <person name="Weaver B."/>
            <person name="Pai G."/>
            <person name="Eisen J.A."/>
            <person name="Rahe E."/>
            <person name="Sheldon W.M."/>
            <person name="Ye W."/>
            <person name="Miller T.R."/>
            <person name="Carlton J."/>
            <person name="Rasko D.A."/>
            <person name="Paulsen I.T."/>
            <person name="Ren Q."/>
            <person name="Daugherty S.C."/>
            <person name="DeBoy R.T."/>
            <person name="Dodson R.J."/>
            <person name="Durkin A.S."/>
            <person name="Madupu R."/>
            <person name="Nelson W.C."/>
            <person name="Sullivan S.A."/>
            <person name="Rosovitz M.J."/>
            <person name="Haft D.H."/>
            <person name="Selengut J."/>
            <person name="Ward N."/>
        </authorList>
    </citation>
    <scope>NUCLEOTIDE SEQUENCE [LARGE SCALE GENOMIC DNA]</scope>
    <source>
        <strain>ATCC 700808 / DSM 15171 / DSS-3</strain>
    </source>
</reference>
<reference key="2">
    <citation type="journal article" date="2014" name="Stand. Genomic Sci.">
        <title>An updated genome annotation for the model marine bacterium Ruegeria pomeroyi DSS-3.</title>
        <authorList>
            <person name="Rivers A.R."/>
            <person name="Smith C.B."/>
            <person name="Moran M.A."/>
        </authorList>
    </citation>
    <scope>GENOME REANNOTATION</scope>
    <source>
        <strain>ATCC 700808 / DSM 15171 / DSS-3</strain>
    </source>
</reference>
<sequence length="101" mass="10934">MIGLEHYLTVAATLFVIGIFGLFLNRKNVIVLLMSIELMLLAVNINLVAFSSFLGDLVGQVFTLFVLTVAAAEAAIGLAILVCFFRNRGTIDVEDVNVMKG</sequence>
<accession>Q5LPT3</accession>
<evidence type="ECO:0000255" key="1">
    <source>
        <dbReference type="HAMAP-Rule" id="MF_01456"/>
    </source>
</evidence>
<feature type="chain" id="PRO_0000390241" description="NADH-quinone oxidoreductase subunit K">
    <location>
        <begin position="1"/>
        <end position="101"/>
    </location>
</feature>
<feature type="transmembrane region" description="Helical" evidence="1">
    <location>
        <begin position="4"/>
        <end position="24"/>
    </location>
</feature>
<feature type="transmembrane region" description="Helical" evidence="1">
    <location>
        <begin position="30"/>
        <end position="50"/>
    </location>
</feature>
<feature type="transmembrane region" description="Helical" evidence="1">
    <location>
        <begin position="65"/>
        <end position="85"/>
    </location>
</feature>
<organism>
    <name type="scientific">Ruegeria pomeroyi (strain ATCC 700808 / DSM 15171 / DSS-3)</name>
    <name type="common">Silicibacter pomeroyi</name>
    <dbReference type="NCBI Taxonomy" id="246200"/>
    <lineage>
        <taxon>Bacteria</taxon>
        <taxon>Pseudomonadati</taxon>
        <taxon>Pseudomonadota</taxon>
        <taxon>Alphaproteobacteria</taxon>
        <taxon>Rhodobacterales</taxon>
        <taxon>Roseobacteraceae</taxon>
        <taxon>Ruegeria</taxon>
    </lineage>
</organism>
<protein>
    <recommendedName>
        <fullName evidence="1">NADH-quinone oxidoreductase subunit K</fullName>
        <ecNumber evidence="1">7.1.1.-</ecNumber>
    </recommendedName>
    <alternativeName>
        <fullName evidence="1">NADH dehydrogenase I subunit K</fullName>
    </alternativeName>
    <alternativeName>
        <fullName evidence="1">NDH-1 subunit K</fullName>
    </alternativeName>
</protein>
<name>NUOK_RUEPO</name>
<dbReference type="EC" id="7.1.1.-" evidence="1"/>
<dbReference type="EMBL" id="CP000031">
    <property type="protein sequence ID" value="AAV96007.1"/>
    <property type="molecule type" value="Genomic_DNA"/>
</dbReference>
<dbReference type="RefSeq" id="WP_011048465.1">
    <property type="nucleotide sequence ID" value="NC_003911.12"/>
</dbReference>
<dbReference type="SMR" id="Q5LPT3"/>
<dbReference type="STRING" id="246200.SPO2766"/>
<dbReference type="PaxDb" id="246200-SPO2766"/>
<dbReference type="KEGG" id="sil:SPO2766"/>
<dbReference type="eggNOG" id="COG0713">
    <property type="taxonomic scope" value="Bacteria"/>
</dbReference>
<dbReference type="HOGENOM" id="CLU_144724_2_0_5"/>
<dbReference type="OrthoDB" id="9811124at2"/>
<dbReference type="Proteomes" id="UP000001023">
    <property type="component" value="Chromosome"/>
</dbReference>
<dbReference type="GO" id="GO:0030964">
    <property type="term" value="C:NADH dehydrogenase complex"/>
    <property type="evidence" value="ECO:0007669"/>
    <property type="project" value="TreeGrafter"/>
</dbReference>
<dbReference type="GO" id="GO:0005886">
    <property type="term" value="C:plasma membrane"/>
    <property type="evidence" value="ECO:0007669"/>
    <property type="project" value="UniProtKB-SubCell"/>
</dbReference>
<dbReference type="GO" id="GO:0050136">
    <property type="term" value="F:NADH:ubiquinone reductase (non-electrogenic) activity"/>
    <property type="evidence" value="ECO:0007669"/>
    <property type="project" value="UniProtKB-UniRule"/>
</dbReference>
<dbReference type="GO" id="GO:0048038">
    <property type="term" value="F:quinone binding"/>
    <property type="evidence" value="ECO:0007669"/>
    <property type="project" value="UniProtKB-KW"/>
</dbReference>
<dbReference type="GO" id="GO:0042773">
    <property type="term" value="P:ATP synthesis coupled electron transport"/>
    <property type="evidence" value="ECO:0007669"/>
    <property type="project" value="InterPro"/>
</dbReference>
<dbReference type="FunFam" id="1.10.287.3510:FF:000001">
    <property type="entry name" value="NADH-quinone oxidoreductase subunit K"/>
    <property type="match status" value="1"/>
</dbReference>
<dbReference type="Gene3D" id="1.10.287.3510">
    <property type="match status" value="1"/>
</dbReference>
<dbReference type="HAMAP" id="MF_01456">
    <property type="entry name" value="NDH1_NuoK"/>
    <property type="match status" value="1"/>
</dbReference>
<dbReference type="InterPro" id="IPR001133">
    <property type="entry name" value="NADH_UbQ_OxRdtase_chain4L/K"/>
</dbReference>
<dbReference type="InterPro" id="IPR039428">
    <property type="entry name" value="NUOK/Mnh_C1-like"/>
</dbReference>
<dbReference type="NCBIfam" id="NF004320">
    <property type="entry name" value="PRK05715.1-2"/>
    <property type="match status" value="1"/>
</dbReference>
<dbReference type="NCBIfam" id="NF004321">
    <property type="entry name" value="PRK05715.1-3"/>
    <property type="match status" value="1"/>
</dbReference>
<dbReference type="NCBIfam" id="NF004323">
    <property type="entry name" value="PRK05715.1-5"/>
    <property type="match status" value="1"/>
</dbReference>
<dbReference type="PANTHER" id="PTHR11434:SF21">
    <property type="entry name" value="NADH DEHYDROGENASE SUBUNIT 4L-RELATED"/>
    <property type="match status" value="1"/>
</dbReference>
<dbReference type="PANTHER" id="PTHR11434">
    <property type="entry name" value="NADH-UBIQUINONE OXIDOREDUCTASE SUBUNIT ND4L"/>
    <property type="match status" value="1"/>
</dbReference>
<dbReference type="Pfam" id="PF00420">
    <property type="entry name" value="Oxidored_q2"/>
    <property type="match status" value="1"/>
</dbReference>
<proteinExistence type="inferred from homology"/>
<comment type="function">
    <text evidence="1">NDH-1 shuttles electrons from NADH, via FMN and iron-sulfur (Fe-S) centers, to quinones in the respiratory chain. The immediate electron acceptor for the enzyme in this species is believed to be ubiquinone. Couples the redox reaction to proton translocation (for every two electrons transferred, four hydrogen ions are translocated across the cytoplasmic membrane), and thus conserves the redox energy in a proton gradient.</text>
</comment>
<comment type="catalytic activity">
    <reaction evidence="1">
        <text>a quinone + NADH + 5 H(+)(in) = a quinol + NAD(+) + 4 H(+)(out)</text>
        <dbReference type="Rhea" id="RHEA:57888"/>
        <dbReference type="ChEBI" id="CHEBI:15378"/>
        <dbReference type="ChEBI" id="CHEBI:24646"/>
        <dbReference type="ChEBI" id="CHEBI:57540"/>
        <dbReference type="ChEBI" id="CHEBI:57945"/>
        <dbReference type="ChEBI" id="CHEBI:132124"/>
    </reaction>
</comment>
<comment type="subunit">
    <text evidence="1">NDH-1 is composed of 14 different subunits. Subunits NuoA, H, J, K, L, M, N constitute the membrane sector of the complex.</text>
</comment>
<comment type="subcellular location">
    <subcellularLocation>
        <location evidence="1">Cell inner membrane</location>
        <topology evidence="1">Multi-pass membrane protein</topology>
    </subcellularLocation>
</comment>
<comment type="similarity">
    <text evidence="1">Belongs to the complex I subunit 4L family.</text>
</comment>
<gene>
    <name evidence="1" type="primary">nuoK</name>
    <name type="ordered locus">SPO2766</name>
</gene>
<keyword id="KW-0997">Cell inner membrane</keyword>
<keyword id="KW-1003">Cell membrane</keyword>
<keyword id="KW-0472">Membrane</keyword>
<keyword id="KW-0520">NAD</keyword>
<keyword id="KW-0874">Quinone</keyword>
<keyword id="KW-1185">Reference proteome</keyword>
<keyword id="KW-1278">Translocase</keyword>
<keyword id="KW-0812">Transmembrane</keyword>
<keyword id="KW-1133">Transmembrane helix</keyword>
<keyword id="KW-0813">Transport</keyword>
<keyword id="KW-0830">Ubiquinone</keyword>